<protein>
    <recommendedName>
        <fullName>Fibrinogen C domain-containing protein 1-A</fullName>
    </recommendedName>
</protein>
<dbReference type="EMBL" id="BC079767">
    <property type="protein sequence ID" value="AAH79767.1"/>
    <property type="molecule type" value="mRNA"/>
</dbReference>
<dbReference type="RefSeq" id="NP_001087425.1">
    <property type="nucleotide sequence ID" value="NM_001093956.1"/>
</dbReference>
<dbReference type="SMR" id="Q6AX44"/>
<dbReference type="GlyCosmos" id="Q6AX44">
    <property type="glycosylation" value="2 sites, No reported glycans"/>
</dbReference>
<dbReference type="DNASU" id="447249"/>
<dbReference type="GeneID" id="447249"/>
<dbReference type="KEGG" id="xla:447249"/>
<dbReference type="AGR" id="Xenbase:XB-GENE-864972"/>
<dbReference type="CTD" id="447249"/>
<dbReference type="Xenbase" id="XB-GENE-864972">
    <property type="gene designation" value="fibcd1.L"/>
</dbReference>
<dbReference type="OrthoDB" id="9990035at2759"/>
<dbReference type="Proteomes" id="UP000186698">
    <property type="component" value="Chromosome 8L"/>
</dbReference>
<dbReference type="Bgee" id="447249">
    <property type="expression patterns" value="Expressed in brain and 7 other cell types or tissues"/>
</dbReference>
<dbReference type="GO" id="GO:0062023">
    <property type="term" value="C:collagen-containing extracellular matrix"/>
    <property type="evidence" value="ECO:0000318"/>
    <property type="project" value="GO_Central"/>
</dbReference>
<dbReference type="GO" id="GO:0005615">
    <property type="term" value="C:extracellular space"/>
    <property type="evidence" value="ECO:0000318"/>
    <property type="project" value="GO_Central"/>
</dbReference>
<dbReference type="GO" id="GO:0016020">
    <property type="term" value="C:membrane"/>
    <property type="evidence" value="ECO:0007669"/>
    <property type="project" value="UniProtKB-SubCell"/>
</dbReference>
<dbReference type="GO" id="GO:0008061">
    <property type="term" value="F:chitin binding"/>
    <property type="evidence" value="ECO:0007669"/>
    <property type="project" value="UniProtKB-KW"/>
</dbReference>
<dbReference type="GO" id="GO:0046872">
    <property type="term" value="F:metal ion binding"/>
    <property type="evidence" value="ECO:0007669"/>
    <property type="project" value="UniProtKB-KW"/>
</dbReference>
<dbReference type="CDD" id="cd00087">
    <property type="entry name" value="FReD"/>
    <property type="match status" value="1"/>
</dbReference>
<dbReference type="FunFam" id="3.90.215.10:FF:000001">
    <property type="entry name" value="Tenascin isoform 1"/>
    <property type="match status" value="1"/>
</dbReference>
<dbReference type="Gene3D" id="3.90.215.10">
    <property type="entry name" value="Gamma Fibrinogen, chain A, domain 1"/>
    <property type="match status" value="1"/>
</dbReference>
<dbReference type="InterPro" id="IPR036056">
    <property type="entry name" value="Fibrinogen-like_C"/>
</dbReference>
<dbReference type="InterPro" id="IPR014716">
    <property type="entry name" value="Fibrinogen_a/b/g_C_1"/>
</dbReference>
<dbReference type="InterPro" id="IPR002181">
    <property type="entry name" value="Fibrinogen_a/b/g_C_dom"/>
</dbReference>
<dbReference type="InterPro" id="IPR050373">
    <property type="entry name" value="Fibrinogen_C-term_domain"/>
</dbReference>
<dbReference type="InterPro" id="IPR020837">
    <property type="entry name" value="Fibrinogen_CS"/>
</dbReference>
<dbReference type="NCBIfam" id="NF040941">
    <property type="entry name" value="GGGWT_bact"/>
    <property type="match status" value="1"/>
</dbReference>
<dbReference type="PANTHER" id="PTHR19143:SF45">
    <property type="entry name" value="FIBRINOGEN C DOMAIN-CONTAINING PROTEIN 1"/>
    <property type="match status" value="1"/>
</dbReference>
<dbReference type="PANTHER" id="PTHR19143">
    <property type="entry name" value="FIBRINOGEN/TENASCIN/ANGIOPOEITIN"/>
    <property type="match status" value="1"/>
</dbReference>
<dbReference type="Pfam" id="PF00147">
    <property type="entry name" value="Fibrinogen_C"/>
    <property type="match status" value="1"/>
</dbReference>
<dbReference type="SMART" id="SM00186">
    <property type="entry name" value="FBG"/>
    <property type="match status" value="1"/>
</dbReference>
<dbReference type="SUPFAM" id="SSF56496">
    <property type="entry name" value="Fibrinogen C-terminal domain-like"/>
    <property type="match status" value="1"/>
</dbReference>
<dbReference type="PROSITE" id="PS00514">
    <property type="entry name" value="FIBRINOGEN_C_1"/>
    <property type="match status" value="1"/>
</dbReference>
<dbReference type="PROSITE" id="PS51406">
    <property type="entry name" value="FIBRINOGEN_C_2"/>
    <property type="match status" value="1"/>
</dbReference>
<name>FBCDA_XENLA</name>
<accession>Q6AX44</accession>
<keyword id="KW-0106">Calcium</keyword>
<keyword id="KW-0147">Chitin-binding</keyword>
<keyword id="KW-1015">Disulfide bond</keyword>
<keyword id="KW-0325">Glycoprotein</keyword>
<keyword id="KW-0472">Membrane</keyword>
<keyword id="KW-0479">Metal-binding</keyword>
<keyword id="KW-1185">Reference proteome</keyword>
<keyword id="KW-0735">Signal-anchor</keyword>
<keyword id="KW-0812">Transmembrane</keyword>
<keyword id="KW-1133">Transmembrane helix</keyword>
<reference key="1">
    <citation type="submission" date="2004-08" db="EMBL/GenBank/DDBJ databases">
        <authorList>
            <consortium name="NIH - Xenopus Gene Collection (XGC) project"/>
        </authorList>
    </citation>
    <scope>NUCLEOTIDE SEQUENCE [LARGE SCALE MRNA]</scope>
    <source>
        <tissue>Eye</tissue>
    </source>
</reference>
<proteinExistence type="evidence at transcript level"/>
<organism>
    <name type="scientific">Xenopus laevis</name>
    <name type="common">African clawed frog</name>
    <dbReference type="NCBI Taxonomy" id="8355"/>
    <lineage>
        <taxon>Eukaryota</taxon>
        <taxon>Metazoa</taxon>
        <taxon>Chordata</taxon>
        <taxon>Craniata</taxon>
        <taxon>Vertebrata</taxon>
        <taxon>Euteleostomi</taxon>
        <taxon>Amphibia</taxon>
        <taxon>Batrachia</taxon>
        <taxon>Anura</taxon>
        <taxon>Pipoidea</taxon>
        <taxon>Pipidae</taxon>
        <taxon>Xenopodinae</taxon>
        <taxon>Xenopus</taxon>
        <taxon>Xenopus</taxon>
    </lineage>
</organism>
<feature type="chain" id="PRO_0000294318" description="Fibrinogen C domain-containing protein 1-A">
    <location>
        <begin position="1"/>
        <end position="457"/>
    </location>
</feature>
<feature type="topological domain" description="Cytoplasmic" evidence="2">
    <location>
        <begin position="1"/>
        <end position="33"/>
    </location>
</feature>
<feature type="transmembrane region" description="Helical; Signal-anchor for type II membrane protein" evidence="2">
    <location>
        <begin position="34"/>
        <end position="54"/>
    </location>
</feature>
<feature type="topological domain" description="Extracellular" evidence="2">
    <location>
        <begin position="55"/>
        <end position="457"/>
    </location>
</feature>
<feature type="domain" description="Fibrinogen C-terminal" evidence="3">
    <location>
        <begin position="231"/>
        <end position="454"/>
    </location>
</feature>
<feature type="region of interest" description="Disordered" evidence="4">
    <location>
        <begin position="1"/>
        <end position="20"/>
    </location>
</feature>
<feature type="region of interest" description="Disordered" evidence="4">
    <location>
        <begin position="216"/>
        <end position="235"/>
    </location>
</feature>
<feature type="binding site" evidence="1">
    <location>
        <position position="389"/>
    </location>
    <ligand>
        <name>Ca(2+)</name>
        <dbReference type="ChEBI" id="CHEBI:29108"/>
    </ligand>
</feature>
<feature type="binding site" evidence="1">
    <location>
        <position position="391"/>
    </location>
    <ligand>
        <name>Ca(2+)</name>
        <dbReference type="ChEBI" id="CHEBI:29108"/>
    </ligand>
</feature>
<feature type="site" description="Implicated in ligand binding" evidence="1">
    <location>
        <position position="401"/>
    </location>
</feature>
<feature type="site" description="Implicated in ligand binding" evidence="1">
    <location>
        <position position="411"/>
    </location>
</feature>
<feature type="site" description="Implicated in ligand binding" evidence="1">
    <location>
        <position position="427"/>
    </location>
</feature>
<feature type="site" description="Implicated in ligand binding" evidence="1">
    <location>
        <position position="428"/>
    </location>
</feature>
<feature type="glycosylation site" description="N-linked (GlcNAc...) asparagine" evidence="2">
    <location>
        <position position="233"/>
    </location>
</feature>
<feature type="glycosylation site" description="N-linked (GlcNAc...) asparagine" evidence="2">
    <location>
        <position position="336"/>
    </location>
</feature>
<feature type="disulfide bond" evidence="3">
    <location>
        <begin position="240"/>
        <end position="269"/>
    </location>
</feature>
<feature type="disulfide bond" evidence="3">
    <location>
        <begin position="397"/>
        <end position="410"/>
    </location>
</feature>
<comment type="function">
    <text evidence="1">Acetyl group-binding receptor which shows a calcium-dependent binding to acetylated structures such as chitin, some N-acetylated carbohydrates, and amino acids.</text>
</comment>
<comment type="subunit">
    <text evidence="1">Homotetramer; disulfide-linked.</text>
</comment>
<comment type="subcellular location">
    <subcellularLocation>
        <location evidence="1">Membrane</location>
        <topology evidence="1">Single-pass type II membrane protein</topology>
    </subcellularLocation>
</comment>
<sequence length="457" mass="51009">MGSDRWKNIGGTPQMEDSAQEKTQRKGCGYILCTVLLSVAVLLAVTVTGAVLFMNHYHAPSTEPPPVITTNMEDPNALVTIERADSSHINIFIDPNCPDPFPRLDGLQSALLSALADHDSEQKVAGGKERVLLTSLSDQVAQMVSQVARQRADWEIVKKVQNGLGAEIGALKNEQGRLIKLLSEGQSHVVQLGSSVSEVLETVQRELGSGRPRLKADLQRAPSRNSRPRGCANGSKPRDCYDIYMSGQQEDGVYSVFPIHYPSGFQVFCDMTTDGGGWTVFQRREDGSVNFFQGWEQYRDGFGKLTGEHWLGLQRIHLLTMQTHYQLRIDLEDFENATAYALYNTFGVGLFSVNPEEDGYPITVSDYTGTAGDSLGKHSGMKFTTKDMDNDHSENNCASFYHGAWWYRNCHTSNLNGQYLTGHHASYADGIEWSSWTGWQYSLKFTEMKIRPQREEN</sequence>
<evidence type="ECO:0000250" key="1"/>
<evidence type="ECO:0000255" key="2"/>
<evidence type="ECO:0000255" key="3">
    <source>
        <dbReference type="PROSITE-ProRule" id="PRU00739"/>
    </source>
</evidence>
<evidence type="ECO:0000256" key="4">
    <source>
        <dbReference type="SAM" id="MobiDB-lite"/>
    </source>
</evidence>
<gene>
    <name type="primary">fibcd1-a</name>
</gene>